<evidence type="ECO:0000255" key="1">
    <source>
        <dbReference type="HAMAP-Rule" id="MF_00284"/>
    </source>
</evidence>
<accession>Q468N7</accession>
<reference key="1">
    <citation type="journal article" date="2006" name="J. Bacteriol.">
        <title>The Methanosarcina barkeri genome: comparative analysis with Methanosarcina acetivorans and Methanosarcina mazei reveals extensive rearrangement within methanosarcinal genomes.</title>
        <authorList>
            <person name="Maeder D.L."/>
            <person name="Anderson I."/>
            <person name="Brettin T.S."/>
            <person name="Bruce D.C."/>
            <person name="Gilna P."/>
            <person name="Han C.S."/>
            <person name="Lapidus A."/>
            <person name="Metcalf W.W."/>
            <person name="Saunders E."/>
            <person name="Tapia R."/>
            <person name="Sowers K.R."/>
        </authorList>
    </citation>
    <scope>NUCLEOTIDE SEQUENCE [LARGE SCALE GENOMIC DNA]</scope>
    <source>
        <strain>Fusaro / DSM 804</strain>
    </source>
</reference>
<name>SYFB_METBF</name>
<protein>
    <recommendedName>
        <fullName evidence="1">Phenylalanine--tRNA ligase beta subunit</fullName>
        <ecNumber evidence="1">6.1.1.20</ecNumber>
    </recommendedName>
    <alternativeName>
        <fullName evidence="1">Phenylalanyl-tRNA synthetase beta subunit</fullName>
        <shortName evidence="1">PheRS</shortName>
    </alternativeName>
</protein>
<keyword id="KW-0030">Aminoacyl-tRNA synthetase</keyword>
<keyword id="KW-0067">ATP-binding</keyword>
<keyword id="KW-0963">Cytoplasm</keyword>
<keyword id="KW-0436">Ligase</keyword>
<keyword id="KW-0460">Magnesium</keyword>
<keyword id="KW-0479">Metal-binding</keyword>
<keyword id="KW-0547">Nucleotide-binding</keyword>
<keyword id="KW-0648">Protein biosynthesis</keyword>
<feature type="chain" id="PRO_1000022418" description="Phenylalanine--tRNA ligase beta subunit">
    <location>
        <begin position="1"/>
        <end position="544"/>
    </location>
</feature>
<feature type="domain" description="B5" evidence="1">
    <location>
        <begin position="270"/>
        <end position="346"/>
    </location>
</feature>
<feature type="binding site" evidence="1">
    <location>
        <position position="324"/>
    </location>
    <ligand>
        <name>Mg(2+)</name>
        <dbReference type="ChEBI" id="CHEBI:18420"/>
        <note>shared with alpha subunit</note>
    </ligand>
</feature>
<feature type="binding site" evidence="1">
    <location>
        <position position="330"/>
    </location>
    <ligand>
        <name>Mg(2+)</name>
        <dbReference type="ChEBI" id="CHEBI:18420"/>
        <note>shared with alpha subunit</note>
    </ligand>
</feature>
<feature type="binding site" evidence="1">
    <location>
        <position position="333"/>
    </location>
    <ligand>
        <name>Mg(2+)</name>
        <dbReference type="ChEBI" id="CHEBI:18420"/>
        <note>shared with alpha subunit</note>
    </ligand>
</feature>
<feature type="binding site" evidence="1">
    <location>
        <position position="334"/>
    </location>
    <ligand>
        <name>Mg(2+)</name>
        <dbReference type="ChEBI" id="CHEBI:18420"/>
        <note>shared with alpha subunit</note>
    </ligand>
</feature>
<dbReference type="EC" id="6.1.1.20" evidence="1"/>
<dbReference type="EMBL" id="CP000099">
    <property type="protein sequence ID" value="AAZ71655.1"/>
    <property type="molecule type" value="Genomic_DNA"/>
</dbReference>
<dbReference type="SMR" id="Q468N7"/>
<dbReference type="STRING" id="269797.Mbar_A2752"/>
<dbReference type="PaxDb" id="269797-Mbar_A2752"/>
<dbReference type="KEGG" id="mba:Mbar_A2752"/>
<dbReference type="eggNOG" id="arCOG00412">
    <property type="taxonomic scope" value="Archaea"/>
</dbReference>
<dbReference type="HOGENOM" id="CLU_020279_3_0_2"/>
<dbReference type="OrthoDB" id="10073at2157"/>
<dbReference type="GO" id="GO:0009328">
    <property type="term" value="C:phenylalanine-tRNA ligase complex"/>
    <property type="evidence" value="ECO:0007669"/>
    <property type="project" value="TreeGrafter"/>
</dbReference>
<dbReference type="GO" id="GO:0005524">
    <property type="term" value="F:ATP binding"/>
    <property type="evidence" value="ECO:0007669"/>
    <property type="project" value="UniProtKB-UniRule"/>
</dbReference>
<dbReference type="GO" id="GO:0000287">
    <property type="term" value="F:magnesium ion binding"/>
    <property type="evidence" value="ECO:0007669"/>
    <property type="project" value="InterPro"/>
</dbReference>
<dbReference type="GO" id="GO:0004826">
    <property type="term" value="F:phenylalanine-tRNA ligase activity"/>
    <property type="evidence" value="ECO:0007669"/>
    <property type="project" value="UniProtKB-UniRule"/>
</dbReference>
<dbReference type="GO" id="GO:0003723">
    <property type="term" value="F:RNA binding"/>
    <property type="evidence" value="ECO:0007669"/>
    <property type="project" value="InterPro"/>
</dbReference>
<dbReference type="GO" id="GO:0006432">
    <property type="term" value="P:phenylalanyl-tRNA aminoacylation"/>
    <property type="evidence" value="ECO:0007669"/>
    <property type="project" value="UniProtKB-UniRule"/>
</dbReference>
<dbReference type="CDD" id="cd00769">
    <property type="entry name" value="PheRS_beta_core"/>
    <property type="match status" value="1"/>
</dbReference>
<dbReference type="FunFam" id="3.30.56.10:FF:000011">
    <property type="entry name" value="Phenylalanine--tRNA ligase beta subunit"/>
    <property type="match status" value="1"/>
</dbReference>
<dbReference type="FunFam" id="3.30.930.10:FF:000132">
    <property type="entry name" value="Phenylalanine--tRNA ligase beta subunit"/>
    <property type="match status" value="1"/>
</dbReference>
<dbReference type="FunFam" id="3.50.40.10:FF:000003">
    <property type="entry name" value="Phenylalanine--tRNA ligase beta subunit"/>
    <property type="match status" value="1"/>
</dbReference>
<dbReference type="Gene3D" id="3.30.56.10">
    <property type="match status" value="2"/>
</dbReference>
<dbReference type="Gene3D" id="3.30.930.10">
    <property type="entry name" value="Bira Bifunctional Protein, Domain 2"/>
    <property type="match status" value="1"/>
</dbReference>
<dbReference type="Gene3D" id="3.50.40.10">
    <property type="entry name" value="Phenylalanyl-trna Synthetase, Chain B, domain 3"/>
    <property type="match status" value="1"/>
</dbReference>
<dbReference type="HAMAP" id="MF_00284">
    <property type="entry name" value="Phe_tRNA_synth_beta2"/>
    <property type="match status" value="1"/>
</dbReference>
<dbReference type="InterPro" id="IPR045864">
    <property type="entry name" value="aa-tRNA-synth_II/BPL/LPL"/>
</dbReference>
<dbReference type="InterPro" id="IPR005146">
    <property type="entry name" value="B3/B4_tRNA-bd"/>
</dbReference>
<dbReference type="InterPro" id="IPR009061">
    <property type="entry name" value="DNA-bd_dom_put_sf"/>
</dbReference>
<dbReference type="InterPro" id="IPR045060">
    <property type="entry name" value="Phe-tRNA-ligase_IIc_bsu"/>
</dbReference>
<dbReference type="InterPro" id="IPR004531">
    <property type="entry name" value="Phe-tRNA-synth_IIc_bsu_arc_euk"/>
</dbReference>
<dbReference type="InterPro" id="IPR020825">
    <property type="entry name" value="Phe-tRNA_synthase-like_B3/B4"/>
</dbReference>
<dbReference type="InterPro" id="IPR022918">
    <property type="entry name" value="Phe_tRNA_ligase_beta2_arc"/>
</dbReference>
<dbReference type="InterPro" id="IPR041616">
    <property type="entry name" value="PheRS_beta_core"/>
</dbReference>
<dbReference type="InterPro" id="IPR005147">
    <property type="entry name" value="tRNA_synthase_B5-dom"/>
</dbReference>
<dbReference type="NCBIfam" id="TIGR00471">
    <property type="entry name" value="pheT_arch"/>
    <property type="match status" value="1"/>
</dbReference>
<dbReference type="PANTHER" id="PTHR10947:SF0">
    <property type="entry name" value="PHENYLALANINE--TRNA LIGASE BETA SUBUNIT"/>
    <property type="match status" value="1"/>
</dbReference>
<dbReference type="PANTHER" id="PTHR10947">
    <property type="entry name" value="PHENYLALANYL-TRNA SYNTHETASE BETA CHAIN AND LEUCINE-RICH REPEAT-CONTAINING PROTEIN 47"/>
    <property type="match status" value="1"/>
</dbReference>
<dbReference type="Pfam" id="PF03483">
    <property type="entry name" value="B3_4"/>
    <property type="match status" value="1"/>
</dbReference>
<dbReference type="Pfam" id="PF03484">
    <property type="entry name" value="B5"/>
    <property type="match status" value="1"/>
</dbReference>
<dbReference type="Pfam" id="PF17759">
    <property type="entry name" value="tRNA_synthFbeta"/>
    <property type="match status" value="1"/>
</dbReference>
<dbReference type="SMART" id="SM00873">
    <property type="entry name" value="B3_4"/>
    <property type="match status" value="1"/>
</dbReference>
<dbReference type="SMART" id="SM00874">
    <property type="entry name" value="B5"/>
    <property type="match status" value="1"/>
</dbReference>
<dbReference type="SUPFAM" id="SSF55681">
    <property type="entry name" value="Class II aaRS and biotin synthetases"/>
    <property type="match status" value="1"/>
</dbReference>
<dbReference type="SUPFAM" id="SSF46955">
    <property type="entry name" value="Putative DNA-binding domain"/>
    <property type="match status" value="2"/>
</dbReference>
<dbReference type="PROSITE" id="PS51483">
    <property type="entry name" value="B5"/>
    <property type="match status" value="1"/>
</dbReference>
<organism>
    <name type="scientific">Methanosarcina barkeri (strain Fusaro / DSM 804)</name>
    <dbReference type="NCBI Taxonomy" id="269797"/>
    <lineage>
        <taxon>Archaea</taxon>
        <taxon>Methanobacteriati</taxon>
        <taxon>Methanobacteriota</taxon>
        <taxon>Stenosarchaea group</taxon>
        <taxon>Methanomicrobia</taxon>
        <taxon>Methanosarcinales</taxon>
        <taxon>Methanosarcinaceae</taxon>
        <taxon>Methanosarcina</taxon>
    </lineage>
</organism>
<gene>
    <name evidence="1" type="primary">pheT</name>
    <name type="ordered locus">Mbar_A2752</name>
</gene>
<comment type="catalytic activity">
    <reaction evidence="1">
        <text>tRNA(Phe) + L-phenylalanine + ATP = L-phenylalanyl-tRNA(Phe) + AMP + diphosphate + H(+)</text>
        <dbReference type="Rhea" id="RHEA:19413"/>
        <dbReference type="Rhea" id="RHEA-COMP:9668"/>
        <dbReference type="Rhea" id="RHEA-COMP:9699"/>
        <dbReference type="ChEBI" id="CHEBI:15378"/>
        <dbReference type="ChEBI" id="CHEBI:30616"/>
        <dbReference type="ChEBI" id="CHEBI:33019"/>
        <dbReference type="ChEBI" id="CHEBI:58095"/>
        <dbReference type="ChEBI" id="CHEBI:78442"/>
        <dbReference type="ChEBI" id="CHEBI:78531"/>
        <dbReference type="ChEBI" id="CHEBI:456215"/>
        <dbReference type="EC" id="6.1.1.20"/>
    </reaction>
</comment>
<comment type="cofactor">
    <cofactor evidence="1">
        <name>Mg(2+)</name>
        <dbReference type="ChEBI" id="CHEBI:18420"/>
    </cofactor>
</comment>
<comment type="subunit">
    <text evidence="1">Tetramer of two alpha and two beta subunits.</text>
</comment>
<comment type="subcellular location">
    <subcellularLocation>
        <location evidence="1">Cytoplasm</location>
    </subcellularLocation>
</comment>
<comment type="similarity">
    <text evidence="1">Belongs to the phenylalanyl-tRNA synthetase beta subunit family. Type 2 subfamily.</text>
</comment>
<proteinExistence type="inferred from homology"/>
<sequence length="544" mass="61478">MPVITLQYDDLEKLTGTDKETIIKRAPMIGADIERVEEESIDIEFFPDRPDLYSVEGAARAMRGFLDLETGLSKYEIKPPKVSISVSEKILRIRPFLGCAVVRGIKFTSSSIKSLMDLQEDLHWGLGRNRKKVSIGVHDLSNVKPPFRYMAVDPGFKFVPLDYTEKMSMTEILEKHPKGTRFAHLVRGFKKYPIILDSDDNVLSFPPIINGTLTSVTESTTDLFIDVTGLGEAVYTALNIVVTALAERGGQIEFVKVVRPDSGELILPDLEPKTRFLTKTEVRDLLGMELSIEEIVKQLERMRFGAKALDEETIEVKVPAYRADILHNYDLVEDIAKGYGYENIKVKIPETYTPGKSHPISLLRAPVNEIMVGLGYYEVMPFTLTSEKINFENMRRQKTDDVTYVLHPISEDQTMIRTTLLPNLLEILALNQHRELPQKIFEFGEVVNNEITGQHVAAVSIHPQANFTEIYEVVDALMREMMLPYEVKESEDPAFLEGRRADVYVNGKKLGVFGEFHPEVINNFALGYAVVGFELDLNDLIGQS</sequence>